<reference key="1">
    <citation type="journal article" date="2000" name="Nature">
        <title>DNA sequence of both chromosomes of the cholera pathogen Vibrio cholerae.</title>
        <authorList>
            <person name="Heidelberg J.F."/>
            <person name="Eisen J.A."/>
            <person name="Nelson W.C."/>
            <person name="Clayton R.A."/>
            <person name="Gwinn M.L."/>
            <person name="Dodson R.J."/>
            <person name="Haft D.H."/>
            <person name="Hickey E.K."/>
            <person name="Peterson J.D."/>
            <person name="Umayam L.A."/>
            <person name="Gill S.R."/>
            <person name="Nelson K.E."/>
            <person name="Read T.D."/>
            <person name="Tettelin H."/>
            <person name="Richardson D.L."/>
            <person name="Ermolaeva M.D."/>
            <person name="Vamathevan J.J."/>
            <person name="Bass S."/>
            <person name="Qin H."/>
            <person name="Dragoi I."/>
            <person name="Sellers P."/>
            <person name="McDonald L.A."/>
            <person name="Utterback T.R."/>
            <person name="Fleischmann R.D."/>
            <person name="Nierman W.C."/>
            <person name="White O."/>
            <person name="Salzberg S.L."/>
            <person name="Smith H.O."/>
            <person name="Colwell R.R."/>
            <person name="Mekalanos J.J."/>
            <person name="Venter J.C."/>
            <person name="Fraser C.M."/>
        </authorList>
    </citation>
    <scope>NUCLEOTIDE SEQUENCE [LARGE SCALE GENOMIC DNA]</scope>
    <source>
        <strain>ATCC 39315 / El Tor Inaba N16961</strain>
    </source>
</reference>
<proteinExistence type="inferred from homology"/>
<organism>
    <name type="scientific">Vibrio cholerae serotype O1 (strain ATCC 39315 / El Tor Inaba N16961)</name>
    <dbReference type="NCBI Taxonomy" id="243277"/>
    <lineage>
        <taxon>Bacteria</taxon>
        <taxon>Pseudomonadati</taxon>
        <taxon>Pseudomonadota</taxon>
        <taxon>Gammaproteobacteria</taxon>
        <taxon>Vibrionales</taxon>
        <taxon>Vibrionaceae</taxon>
        <taxon>Vibrio</taxon>
    </lineage>
</organism>
<feature type="chain" id="PRO_0000186037" description="Probable maleylacetoacetate isomerase">
    <location>
        <begin position="1"/>
        <end position="215"/>
    </location>
</feature>
<feature type="domain" description="GST N-terminal">
    <location>
        <begin position="2"/>
        <end position="85"/>
    </location>
</feature>
<feature type="domain" description="GST C-terminal">
    <location>
        <begin position="90"/>
        <end position="215"/>
    </location>
</feature>
<sequence>MMSLILYGYWRSSAAYRVRIALNIKQLVYESRAVHLSREGGEQHHAEFHRLNPSELIPVLIDGELCLNQSLAIIEYLDETYPAPRLIPERGAERYQVKALALDIAADIHPINNLRILQYLTAKLGVADEEKNRWYRHWIDKGFQGLEEKLRHTAGEYCVGNRLSLVDVCLVPQVYNAERFDLDMSRYPTLQQIAARLRALPAFAQAAPENQPDAC</sequence>
<evidence type="ECO:0000305" key="1"/>
<gene>
    <name type="primary">maiA</name>
    <name type="ordered locus">VC_1347</name>
</gene>
<name>MAAI_VIBCH</name>
<comment type="catalytic activity">
    <reaction>
        <text>4-maleylacetoacetate = 4-fumarylacetoacetate</text>
        <dbReference type="Rhea" id="RHEA:14817"/>
        <dbReference type="ChEBI" id="CHEBI:17105"/>
        <dbReference type="ChEBI" id="CHEBI:18034"/>
        <dbReference type="EC" id="5.2.1.2"/>
    </reaction>
</comment>
<comment type="pathway">
    <text>Amino-acid degradation; L-phenylalanine degradation; acetoacetate and fumarate from L-phenylalanine: step 5/6.</text>
</comment>
<comment type="similarity">
    <text evidence="1">Belongs to the GST superfamily. Zeta family.</text>
</comment>
<keyword id="KW-0413">Isomerase</keyword>
<keyword id="KW-0585">Phenylalanine catabolism</keyword>
<keyword id="KW-1185">Reference proteome</keyword>
<keyword id="KW-0828">Tyrosine catabolism</keyword>
<protein>
    <recommendedName>
        <fullName>Probable maleylacetoacetate isomerase</fullName>
        <shortName>MAAI</shortName>
        <ecNumber>5.2.1.2</ecNumber>
    </recommendedName>
</protein>
<dbReference type="EC" id="5.2.1.2"/>
<dbReference type="EMBL" id="AE003852">
    <property type="protein sequence ID" value="AAF94505.1"/>
    <property type="molecule type" value="Genomic_DNA"/>
</dbReference>
<dbReference type="PIR" id="F82211">
    <property type="entry name" value="F82211"/>
</dbReference>
<dbReference type="RefSeq" id="NP_230991.1">
    <property type="nucleotide sequence ID" value="NC_002505.1"/>
</dbReference>
<dbReference type="SMR" id="Q9KSB2"/>
<dbReference type="STRING" id="243277.VC_1347"/>
<dbReference type="DNASU" id="2614801"/>
<dbReference type="EnsemblBacteria" id="AAF94505">
    <property type="protein sequence ID" value="AAF94505"/>
    <property type="gene ID" value="VC_1347"/>
</dbReference>
<dbReference type="KEGG" id="vch:VC_1347"/>
<dbReference type="PATRIC" id="fig|243277.26.peg.1284"/>
<dbReference type="eggNOG" id="COG0625">
    <property type="taxonomic scope" value="Bacteria"/>
</dbReference>
<dbReference type="HOGENOM" id="CLU_011226_20_1_6"/>
<dbReference type="UniPathway" id="UPA00139">
    <property type="reaction ID" value="UER00340"/>
</dbReference>
<dbReference type="Proteomes" id="UP000000584">
    <property type="component" value="Chromosome 1"/>
</dbReference>
<dbReference type="GO" id="GO:0005737">
    <property type="term" value="C:cytoplasm"/>
    <property type="evidence" value="ECO:0007669"/>
    <property type="project" value="InterPro"/>
</dbReference>
<dbReference type="GO" id="GO:0004364">
    <property type="term" value="F:glutathione transferase activity"/>
    <property type="evidence" value="ECO:0000318"/>
    <property type="project" value="GO_Central"/>
</dbReference>
<dbReference type="GO" id="GO:0016034">
    <property type="term" value="F:maleylacetoacetate isomerase activity"/>
    <property type="evidence" value="ECO:0000318"/>
    <property type="project" value="GO_Central"/>
</dbReference>
<dbReference type="GO" id="GO:0006749">
    <property type="term" value="P:glutathione metabolic process"/>
    <property type="evidence" value="ECO:0000318"/>
    <property type="project" value="GO_Central"/>
</dbReference>
<dbReference type="GO" id="GO:0006559">
    <property type="term" value="P:L-phenylalanine catabolic process"/>
    <property type="evidence" value="ECO:0000318"/>
    <property type="project" value="GO_Central"/>
</dbReference>
<dbReference type="GO" id="GO:0006572">
    <property type="term" value="P:tyrosine catabolic process"/>
    <property type="evidence" value="ECO:0007669"/>
    <property type="project" value="UniProtKB-KW"/>
</dbReference>
<dbReference type="CDD" id="cd03191">
    <property type="entry name" value="GST_C_Zeta"/>
    <property type="match status" value="1"/>
</dbReference>
<dbReference type="CDD" id="cd03042">
    <property type="entry name" value="GST_N_Zeta"/>
    <property type="match status" value="1"/>
</dbReference>
<dbReference type="FunFam" id="1.20.1050.10:FF:000017">
    <property type="entry name" value="Maleylacetoacetate isomerase"/>
    <property type="match status" value="1"/>
</dbReference>
<dbReference type="FunFam" id="3.40.30.10:FF:000293">
    <property type="entry name" value="Maleylacetoacetate isomerase MaiA"/>
    <property type="match status" value="1"/>
</dbReference>
<dbReference type="Gene3D" id="1.20.1050.10">
    <property type="match status" value="1"/>
</dbReference>
<dbReference type="Gene3D" id="3.40.30.10">
    <property type="entry name" value="Glutaredoxin"/>
    <property type="match status" value="1"/>
</dbReference>
<dbReference type="InterPro" id="IPR010987">
    <property type="entry name" value="Glutathione-S-Trfase_C-like"/>
</dbReference>
<dbReference type="InterPro" id="IPR036282">
    <property type="entry name" value="Glutathione-S-Trfase_C_sf"/>
</dbReference>
<dbReference type="InterPro" id="IPR040079">
    <property type="entry name" value="Glutathione_S-Trfase"/>
</dbReference>
<dbReference type="InterPro" id="IPR004045">
    <property type="entry name" value="Glutathione_S-Trfase_N"/>
</dbReference>
<dbReference type="InterPro" id="IPR004046">
    <property type="entry name" value="GST_C"/>
</dbReference>
<dbReference type="InterPro" id="IPR005955">
    <property type="entry name" value="GST_Zeta"/>
</dbReference>
<dbReference type="InterPro" id="IPR034330">
    <property type="entry name" value="GST_Zeta_C"/>
</dbReference>
<dbReference type="InterPro" id="IPR034333">
    <property type="entry name" value="GST_Zeta_N"/>
</dbReference>
<dbReference type="InterPro" id="IPR036249">
    <property type="entry name" value="Thioredoxin-like_sf"/>
</dbReference>
<dbReference type="NCBIfam" id="TIGR01262">
    <property type="entry name" value="maiA"/>
    <property type="match status" value="1"/>
</dbReference>
<dbReference type="PANTHER" id="PTHR42673:SF21">
    <property type="entry name" value="GLUTATHIONE S-TRANSFERASE YFCF"/>
    <property type="match status" value="1"/>
</dbReference>
<dbReference type="PANTHER" id="PTHR42673">
    <property type="entry name" value="MALEYLACETOACETATE ISOMERASE"/>
    <property type="match status" value="1"/>
</dbReference>
<dbReference type="Pfam" id="PF14497">
    <property type="entry name" value="GST_C_3"/>
    <property type="match status" value="1"/>
</dbReference>
<dbReference type="Pfam" id="PF02798">
    <property type="entry name" value="GST_N"/>
    <property type="match status" value="1"/>
</dbReference>
<dbReference type="SFLD" id="SFLDS00019">
    <property type="entry name" value="Glutathione_Transferase_(cytos"/>
    <property type="match status" value="1"/>
</dbReference>
<dbReference type="SFLD" id="SFLDG00358">
    <property type="entry name" value="Main_(cytGST)"/>
    <property type="match status" value="1"/>
</dbReference>
<dbReference type="SUPFAM" id="SSF47616">
    <property type="entry name" value="GST C-terminal domain-like"/>
    <property type="match status" value="1"/>
</dbReference>
<dbReference type="SUPFAM" id="SSF52833">
    <property type="entry name" value="Thioredoxin-like"/>
    <property type="match status" value="1"/>
</dbReference>
<dbReference type="PROSITE" id="PS50405">
    <property type="entry name" value="GST_CTER"/>
    <property type="match status" value="1"/>
</dbReference>
<dbReference type="PROSITE" id="PS50404">
    <property type="entry name" value="GST_NTER"/>
    <property type="match status" value="1"/>
</dbReference>
<accession>Q9KSB2</accession>